<name>PAMT_CAPAN</name>
<organism>
    <name type="scientific">Capsicum annuum</name>
    <name type="common">Capsicum pepper</name>
    <dbReference type="NCBI Taxonomy" id="4072"/>
    <lineage>
        <taxon>Eukaryota</taxon>
        <taxon>Viridiplantae</taxon>
        <taxon>Streptophyta</taxon>
        <taxon>Embryophyta</taxon>
        <taxon>Tracheophyta</taxon>
        <taxon>Spermatophyta</taxon>
        <taxon>Magnoliopsida</taxon>
        <taxon>eudicotyledons</taxon>
        <taxon>Gunneridae</taxon>
        <taxon>Pentapetalae</taxon>
        <taxon>asterids</taxon>
        <taxon>lamiids</taxon>
        <taxon>Solanales</taxon>
        <taxon>Solanaceae</taxon>
        <taxon>Solanoideae</taxon>
        <taxon>Capsiceae</taxon>
        <taxon>Capsicum</taxon>
    </lineage>
</organism>
<keyword id="KW-0032">Aminotransferase</keyword>
<keyword id="KW-0175">Coiled coil</keyword>
<keyword id="KW-0663">Pyridoxal phosphate</keyword>
<keyword id="KW-1185">Reference proteome</keyword>
<keyword id="KW-0808">Transferase</keyword>
<protein>
    <recommendedName>
        <fullName evidence="1">Vanillin aminotransferase</fullName>
        <ecNumber evidence="1">2.6.1.119</ecNumber>
    </recommendedName>
    <alternativeName>
        <fullName evidence="7">Putative aminotransferase</fullName>
        <shortName evidence="7">pAMT</shortName>
    </alternativeName>
</protein>
<comment type="function">
    <text evidence="1 8">Involved in the biosynthesis of capsaicinoids natural products, pungent alkaloids synthesized from phenylpropanoid intermediates in the placental tissue of chili pepper fruit acting as repellant on herbivorous mammals and conferring spiciness to hot peppers (PubMed:35858994). Can transfer an amine from vanillylamine to pyruvate forming vanillin and L-alanine (By similarity).</text>
</comment>
<comment type="catalytic activity">
    <reaction evidence="1">
        <text>vanillin + L-alanine = vanillylamine + pyruvate</text>
        <dbReference type="Rhea" id="RHEA:63828"/>
        <dbReference type="ChEBI" id="CHEBI:15361"/>
        <dbReference type="ChEBI" id="CHEBI:18346"/>
        <dbReference type="ChEBI" id="CHEBI:57972"/>
        <dbReference type="ChEBI" id="CHEBI:149596"/>
        <dbReference type="EC" id="2.6.1.119"/>
    </reaction>
    <physiologicalReaction direction="left-to-right" evidence="1">
        <dbReference type="Rhea" id="RHEA:63829"/>
    </physiologicalReaction>
</comment>
<comment type="pathway">
    <text evidence="1">Aromatic compound metabolism; phenylpropanoid biosynthesis.</text>
</comment>
<comment type="tissue specificity">
    <text evidence="5">Confined to the placenta of green fruits at high levels (PubMed:35858994). Barely detectable in the pericarp and seeds as well as in the placenta of mature fruits (PubMed:35858994).</text>
</comment>
<comment type="similarity">
    <text evidence="9">Belongs to the class-III pyridoxal-phosphate-dependent aminotransferase family.</text>
</comment>
<comment type="online information" name="Protein Spotlight">
    <link uri="https://www.proteinspotlight.org/back_issues/263/"/>
    <text>Hot - Issue 263 of November 2023</text>
</comment>
<dbReference type="EC" id="2.6.1.119" evidence="1"/>
<dbReference type="EMBL" id="HM991733">
    <property type="protein sequence ID" value="ADM13673.1"/>
    <property type="molecule type" value="mRNA"/>
</dbReference>
<dbReference type="EMBL" id="LC032105">
    <property type="protein sequence ID" value="BAU36961.1"/>
    <property type="molecule type" value="Genomic_DNA"/>
</dbReference>
<dbReference type="EMBL" id="LC423555">
    <property type="protein sequence ID" value="BBG28790.1"/>
    <property type="molecule type" value="mRNA"/>
</dbReference>
<dbReference type="EMBL" id="AYRZ02000003">
    <property type="protein sequence ID" value="PHT86213.1"/>
    <property type="molecule type" value="Genomic_DNA"/>
</dbReference>
<dbReference type="RefSeq" id="NP_001311635.1">
    <property type="nucleotide sequence ID" value="NM_001324706.1"/>
</dbReference>
<dbReference type="SMR" id="E1AQY3"/>
<dbReference type="STRING" id="4072.E1AQY3"/>
<dbReference type="EnsemblPlants" id="PHT86213">
    <property type="protein sequence ID" value="PHT86213"/>
    <property type="gene ID" value="T459_08319"/>
</dbReference>
<dbReference type="GeneID" id="107854420"/>
<dbReference type="Gramene" id="PHT86213">
    <property type="protein sequence ID" value="PHT86213"/>
    <property type="gene ID" value="T459_08319"/>
</dbReference>
<dbReference type="KEGG" id="cann:107854420"/>
<dbReference type="OMA" id="GYFHFSS"/>
<dbReference type="OrthoDB" id="425114at2759"/>
<dbReference type="UniPathway" id="UPA00711"/>
<dbReference type="Proteomes" id="UP000222542">
    <property type="component" value="Chromosome 3"/>
</dbReference>
<dbReference type="GO" id="GO:0004015">
    <property type="term" value="F:adenosylmethionine-8-amino-7-oxononanoate transaminase activity"/>
    <property type="evidence" value="ECO:0000318"/>
    <property type="project" value="GO_Central"/>
</dbReference>
<dbReference type="GO" id="GO:0030170">
    <property type="term" value="F:pyridoxal phosphate binding"/>
    <property type="evidence" value="ECO:0007669"/>
    <property type="project" value="InterPro"/>
</dbReference>
<dbReference type="GO" id="GO:0009102">
    <property type="term" value="P:biotin biosynthetic process"/>
    <property type="evidence" value="ECO:0000318"/>
    <property type="project" value="GO_Central"/>
</dbReference>
<dbReference type="GO" id="GO:0009448">
    <property type="term" value="P:gamma-aminobutyric acid metabolic process"/>
    <property type="evidence" value="ECO:0000318"/>
    <property type="project" value="GO_Central"/>
</dbReference>
<dbReference type="GO" id="GO:0009699">
    <property type="term" value="P:phenylpropanoid biosynthetic process"/>
    <property type="evidence" value="ECO:0007669"/>
    <property type="project" value="UniProtKB-UniPathway"/>
</dbReference>
<dbReference type="CDD" id="cd00610">
    <property type="entry name" value="OAT_like"/>
    <property type="match status" value="1"/>
</dbReference>
<dbReference type="FunFam" id="3.40.640.10:FF:000014">
    <property type="entry name" value="Adenosylmethionine-8-amino-7-oxononanoate aminotransferase, probable"/>
    <property type="match status" value="1"/>
</dbReference>
<dbReference type="Gene3D" id="3.90.1150.10">
    <property type="entry name" value="Aspartate Aminotransferase, domain 1"/>
    <property type="match status" value="1"/>
</dbReference>
<dbReference type="Gene3D" id="3.40.640.10">
    <property type="entry name" value="Type I PLP-dependent aspartate aminotransferase-like (Major domain)"/>
    <property type="match status" value="1"/>
</dbReference>
<dbReference type="InterPro" id="IPR005814">
    <property type="entry name" value="Aminotrans_3"/>
</dbReference>
<dbReference type="InterPro" id="IPR049704">
    <property type="entry name" value="Aminotrans_3_PPA_site"/>
</dbReference>
<dbReference type="InterPro" id="IPR015424">
    <property type="entry name" value="PyrdxlP-dep_Trfase"/>
</dbReference>
<dbReference type="InterPro" id="IPR015421">
    <property type="entry name" value="PyrdxlP-dep_Trfase_major"/>
</dbReference>
<dbReference type="InterPro" id="IPR015422">
    <property type="entry name" value="PyrdxlP-dep_Trfase_small"/>
</dbReference>
<dbReference type="NCBIfam" id="NF004767">
    <property type="entry name" value="PRK06105.1"/>
    <property type="match status" value="1"/>
</dbReference>
<dbReference type="PANTHER" id="PTHR42684">
    <property type="entry name" value="ADENOSYLMETHIONINE-8-AMINO-7-OXONONANOATE AMINOTRANSFERASE"/>
    <property type="match status" value="1"/>
</dbReference>
<dbReference type="PANTHER" id="PTHR42684:SF10">
    <property type="entry name" value="GAMMA AMINOBUTYRATE TRANSAMINASE 2"/>
    <property type="match status" value="1"/>
</dbReference>
<dbReference type="Pfam" id="PF00202">
    <property type="entry name" value="Aminotran_3"/>
    <property type="match status" value="1"/>
</dbReference>
<dbReference type="SUPFAM" id="SSF53383">
    <property type="entry name" value="PLP-dependent transferases"/>
    <property type="match status" value="1"/>
</dbReference>
<dbReference type="PROSITE" id="PS00600">
    <property type="entry name" value="AA_TRANSFER_CLASS_3"/>
    <property type="match status" value="1"/>
</dbReference>
<sequence length="459" mass="50728">MANITNEFMGHDMLAPFTAGWQSDMEPLVIEKSEGSYVYDINGKKYLDTLSGLWCTTLGGSETRLVEAANKQLNTLPFYHSFWNRTTKPSLDLAKELLNMFTANKMAKVFFTNSGSEANDTQVKLVWYYNNALGRPQKKKIIARAKAYHGSTYISAGLSGLPPMHQKFDLPPPFVLHTECPHYWAYHLPGETEEEFSTRLANNLESLILNEGPETVAAFIAEPVLGAAGVILPPATYFDKVQAILRKHDILFIADEVVCGFGRLGTMFGSDKYNIKPDLVSVAKALSSGYMPIAAVLVSQKISSVILSESNKIGAFCHGFTYSGHPVACAVALEALKIYKERNITEVVNKISQKFQEGLKAFADSPIIGEIRGTGLALSTEFVNNKSPNDPFPYEWAVGTYFGAQCAKYGMLVSSTGDHVNMAPPFTLSLEELDELIRIYGKALKDTEKRVEELKSQKK</sequence>
<feature type="chain" id="PRO_0000458907" description="Vanillin aminotransferase">
    <location>
        <begin position="1"/>
        <end position="459"/>
    </location>
</feature>
<feature type="coiled-coil region" evidence="3">
    <location>
        <begin position="430"/>
        <end position="457"/>
    </location>
</feature>
<feature type="binding site" evidence="2">
    <location>
        <begin position="115"/>
        <end position="116"/>
    </location>
    <ligand>
        <name>pyridoxal 5'-phosphate</name>
        <dbReference type="ChEBI" id="CHEBI:597326"/>
    </ligand>
</feature>
<feature type="binding site" evidence="2">
    <location>
        <position position="255"/>
    </location>
    <ligand>
        <name>pyridoxal 5'-phosphate</name>
        <dbReference type="ChEBI" id="CHEBI:597326"/>
    </ligand>
</feature>
<feature type="binding site" evidence="2">
    <location>
        <begin position="320"/>
        <end position="321"/>
    </location>
    <ligand>
        <name>pyridoxal 5'-phosphate</name>
        <dbReference type="ChEBI" id="CHEBI:597326"/>
    </ligand>
</feature>
<feature type="modified residue" description="N6-(pyridoxal phosphate)lysine" evidence="2">
    <location>
        <position position="284"/>
    </location>
</feature>
<feature type="sequence variant" description="In strain: cv. Himo and cv. Takanotsume; altered activity leading to reduced pungency of sweeter fruits producing preferentially capsinoids over capsaicinoids." evidence="4 6">
    <original>N</original>
    <variation>K</variation>
    <location>
        <position position="210"/>
    </location>
</feature>
<feature type="sequence variant" description="In strain: cv. Himo; altered activity leading to reduced pungency of sweeter fruits producing preferentially capsinoids over capsaicinoids." evidence="6">
    <original>C</original>
    <variation>R</variation>
    <location>
        <position position="259"/>
    </location>
</feature>
<feature type="sequence variant" description="In strain: cv. Himo and cv. Takanotsume; altered activity leading to reduced pungency of sweeter fruits producing preferentially capsinoids over capsaicinoids." evidence="4 6">
    <original>A</original>
    <variation>T</variation>
    <location>
        <position position="377"/>
    </location>
</feature>
<feature type="sequence variant" description="In strain: cv. Himo and cv. Takanotsume; altered activity leading to reduced pungency of sweeter fruits producing preferentially capsinoids over capsaicinoids." evidence="4 6">
    <original>N</original>
    <variation>D</variation>
    <location>
        <position position="384"/>
    </location>
</feature>
<proteinExistence type="evidence at transcript level"/>
<reference key="1">
    <citation type="submission" date="2010-07" db="EMBL/GenBank/DDBJ databases">
        <title>Cloning and expression analysis of a putative aminotransferase gene for pungency pathway in Capsicum annuum Yidu Red.</title>
        <authorList>
            <person name="Ruan W."/>
            <person name="Guo Q."/>
            <person name="Jia C."/>
        </authorList>
    </citation>
    <scope>NUCLEOTIDE SEQUENCE [MRNA]</scope>
    <source>
        <strain>cv. Yidu-Red 201</strain>
    </source>
</reference>
<reference key="2">
    <citation type="journal article" date="2015" name="Mol. Breed.">
        <title>Multiple loss-of-function putative aminotransferase alleles contribute to low pungency and capsinoid biosynthesis in Capsicum chinense.</title>
        <authorList>
            <person name="Tanaka Y."/>
            <person name="Sonoyama T."/>
            <person name="Muraga Y."/>
            <person name="Koeda S."/>
            <person name="Goto T."/>
            <person name="Yoshida Y."/>
            <person name="Yasuba K."/>
        </authorList>
    </citation>
    <scope>NUCLEOTIDE SEQUENCE [GENOMIC DNA]</scope>
    <scope>VARIANTS LYS-210; ARG-259; THR-377 AND ASP-384</scope>
    <source>
        <strain>cv. Himo</strain>
    </source>
</reference>
<reference key="3">
    <citation type="journal article" date="2019" name="Breed. Sci.">
        <title>Discovery of novel unfunctional pAMT allele pamt10 causing loss of pungency in sweet bell pepper (Capsicum annuum L.).</title>
        <authorList>
            <person name="Tsurumaki K."/>
            <person name="Sasanuma T."/>
        </authorList>
    </citation>
    <scope>NUCLEOTIDE SEQUENCE [MRNA]</scope>
    <scope>VARIANTS LYS-210; THR-377 AND ASP-384</scope>
    <source>
        <strain>cv. Takanotsume</strain>
    </source>
</reference>
<reference key="4">
    <citation type="journal article" date="2014" name="Nat. Genet.">
        <title>Genome sequence of the hot pepper provides insights into the evolution of pungency in Capsicum species.</title>
        <authorList>
            <person name="Kim S."/>
            <person name="Park M."/>
            <person name="Yeom S.I."/>
            <person name="Kim Y.M."/>
            <person name="Lee J.M."/>
            <person name="Lee H.A."/>
            <person name="Seo E."/>
            <person name="Choi J."/>
            <person name="Cheong K."/>
            <person name="Kim K.T."/>
            <person name="Jung K."/>
            <person name="Lee G.W."/>
            <person name="Oh S.K."/>
            <person name="Bae C."/>
            <person name="Kim S.B."/>
            <person name="Lee H.Y."/>
            <person name="Kim S.Y."/>
            <person name="Kim M.S."/>
            <person name="Kang B.C."/>
            <person name="Jo Y.D."/>
            <person name="Yang H.B."/>
            <person name="Jeong H.J."/>
            <person name="Kang W.H."/>
            <person name="Kwon J.K."/>
            <person name="Shin C."/>
            <person name="Lim J.Y."/>
            <person name="Park J.H."/>
            <person name="Huh J.H."/>
            <person name="Kim J.S."/>
            <person name="Kim B.D."/>
            <person name="Cohen O."/>
            <person name="Paran I."/>
            <person name="Suh M.C."/>
            <person name="Lee S.B."/>
            <person name="Kim Y.K."/>
            <person name="Shin Y."/>
            <person name="Noh S.J."/>
            <person name="Park J."/>
            <person name="Seo Y.S."/>
            <person name="Kwon S.Y."/>
            <person name="Kim H.A."/>
            <person name="Park J.M."/>
            <person name="Kim H.J."/>
            <person name="Choi S.B."/>
            <person name="Bosland P.W."/>
            <person name="Reeves G."/>
            <person name="Jo S.H."/>
            <person name="Lee B.W."/>
            <person name="Cho H.T."/>
            <person name="Choi H.S."/>
            <person name="Lee M.S."/>
            <person name="Yu Y."/>
            <person name="Do Choi Y."/>
            <person name="Park B.S."/>
            <person name="van Deynze A."/>
            <person name="Ashrafi H."/>
            <person name="Hill T."/>
            <person name="Kim W.T."/>
            <person name="Pai H.S."/>
            <person name="Ahn H.K."/>
            <person name="Yeam I."/>
            <person name="Giovannoni J.J."/>
            <person name="Rose J.K."/>
            <person name="Soerensen I."/>
            <person name="Lee S.J."/>
            <person name="Kim R.W."/>
            <person name="Choi I.Y."/>
            <person name="Choi B.S."/>
            <person name="Lim J.S."/>
            <person name="Lee Y.H."/>
            <person name="Choi D."/>
        </authorList>
    </citation>
    <scope>NUCLEOTIDE SEQUENCE [LARGE SCALE GENOMIC DNA]</scope>
    <source>
        <strain>cv. CM334</strain>
    </source>
</reference>
<reference key="5">
    <citation type="journal article" date="2017" name="Genome Biol.">
        <title>New reference genome sequences of hot pepper reveal the massive evolution of plant disease-resistance genes by retroduplication.</title>
        <authorList>
            <person name="Kim S."/>
            <person name="Park J."/>
            <person name="Yeom S.I."/>
            <person name="Kim Y.M."/>
            <person name="Seo E."/>
            <person name="Kim K.T."/>
            <person name="Kim M.S."/>
            <person name="Lee J.M."/>
            <person name="Cheong K."/>
            <person name="Shin H.S."/>
            <person name="Kim S.B."/>
            <person name="Han K."/>
            <person name="Lee J."/>
            <person name="Park M."/>
            <person name="Lee H.A."/>
            <person name="Lee H.Y."/>
            <person name="Lee Y."/>
            <person name="Oh S."/>
            <person name="Lee J.H."/>
            <person name="Choi E."/>
            <person name="Choi E."/>
            <person name="Lee S.E."/>
            <person name="Jeon J."/>
            <person name="Kim H."/>
            <person name="Choi G."/>
            <person name="Song H."/>
            <person name="Lee J."/>
            <person name="Lee S.C."/>
            <person name="Kwon J.K."/>
            <person name="Lee H.Y."/>
            <person name="Koo N."/>
            <person name="Hong Y."/>
            <person name="Kim R.W."/>
            <person name="Kang W.H."/>
            <person name="Huh J.H."/>
            <person name="Kang B.C."/>
            <person name="Yang T.J."/>
            <person name="Lee Y.H."/>
            <person name="Bennetzen J.L."/>
            <person name="Choi D."/>
        </authorList>
    </citation>
    <scope>NUCLEOTIDE SEQUENCE [LARGE SCALE GENOMIC DNA]</scope>
    <source>
        <strain>cv. CM334</strain>
    </source>
</reference>
<reference key="6">
    <citation type="journal article" date="2022" name="Sci. Rep.">
        <title>Vanillin reduction in the biosynthetic pathway of capsiate, a non-pungent component of Capsicum fruits, is catalyzed by cinnamyl alcohol dehydrogenase.</title>
        <authorList>
            <person name="Sano K."/>
            <person name="Uzawa Y."/>
            <person name="Kaneshima I."/>
            <person name="Nakasato S."/>
            <person name="Hashimoto M."/>
            <person name="Tanaka Y."/>
            <person name="Nakatani S."/>
            <person name="Kobata K."/>
        </authorList>
    </citation>
    <scope>FUNCTION</scope>
    <scope>TISSUE SPECIFICITY</scope>
    <source>
        <strain>cv. Aji Dulce strain 2</strain>
        <strain>cv. CH-19 Sweet</strain>
        <strain>cv. Himo</strain>
        <strain>cv. Moruga Yellow</strain>
        <strain>cv. Red Habanero</strain>
        <strain>cv. Yume-matsuri</strain>
    </source>
</reference>
<evidence type="ECO:0000250" key="1">
    <source>
        <dbReference type="UniProtKB" id="O82521"/>
    </source>
</evidence>
<evidence type="ECO:0000250" key="2">
    <source>
        <dbReference type="UniProtKB" id="P12995"/>
    </source>
</evidence>
<evidence type="ECO:0000255" key="3"/>
<evidence type="ECO:0000269" key="4">
    <source>
    </source>
</evidence>
<evidence type="ECO:0000269" key="5">
    <source>
    </source>
</evidence>
<evidence type="ECO:0000269" key="6">
    <source ref="2"/>
</evidence>
<evidence type="ECO:0000303" key="7">
    <source>
    </source>
</evidence>
<evidence type="ECO:0000303" key="8">
    <source>
    </source>
</evidence>
<evidence type="ECO:0000305" key="9"/>
<evidence type="ECO:0000312" key="10">
    <source>
        <dbReference type="EMBL" id="PHT86213.1"/>
    </source>
</evidence>
<gene>
    <name evidence="1" type="primary">VAMT</name>
    <name evidence="10" type="ORF">T459_08319</name>
</gene>
<accession>E1AQY3</accession>
<accession>A0A125SQB7</accession>
<accession>A0A3T0ZHJ7</accession>